<dbReference type="EC" id="1.8.1.8" evidence="1"/>
<dbReference type="EMBL" id="CP000057">
    <property type="protein sequence ID" value="AAX87924.1"/>
    <property type="molecule type" value="Genomic_DNA"/>
</dbReference>
<dbReference type="RefSeq" id="WP_011272260.1">
    <property type="nucleotide sequence ID" value="NC_007146.2"/>
</dbReference>
<dbReference type="SMR" id="Q4QM23"/>
<dbReference type="KEGG" id="hit:NTHI1048"/>
<dbReference type="HOGENOM" id="CLU_014657_3_0_6"/>
<dbReference type="Proteomes" id="UP000002525">
    <property type="component" value="Chromosome"/>
</dbReference>
<dbReference type="GO" id="GO:0005886">
    <property type="term" value="C:plasma membrane"/>
    <property type="evidence" value="ECO:0007669"/>
    <property type="project" value="UniProtKB-SubCell"/>
</dbReference>
<dbReference type="GO" id="GO:0009055">
    <property type="term" value="F:electron transfer activity"/>
    <property type="evidence" value="ECO:0007669"/>
    <property type="project" value="UniProtKB-UniRule"/>
</dbReference>
<dbReference type="GO" id="GO:0047134">
    <property type="term" value="F:protein-disulfide reductase [NAD(P)H] activity"/>
    <property type="evidence" value="ECO:0007669"/>
    <property type="project" value="UniProtKB-UniRule"/>
</dbReference>
<dbReference type="GO" id="GO:0045454">
    <property type="term" value="P:cell redox homeostasis"/>
    <property type="evidence" value="ECO:0007669"/>
    <property type="project" value="TreeGrafter"/>
</dbReference>
<dbReference type="GO" id="GO:0017004">
    <property type="term" value="P:cytochrome complex assembly"/>
    <property type="evidence" value="ECO:0007669"/>
    <property type="project" value="UniProtKB-UniRule"/>
</dbReference>
<dbReference type="CDD" id="cd02953">
    <property type="entry name" value="DsbDgamma"/>
    <property type="match status" value="1"/>
</dbReference>
<dbReference type="FunFam" id="2.60.40.1250:FF:000002">
    <property type="entry name" value="Thiol:disulfide interchange protein DsbD"/>
    <property type="match status" value="1"/>
</dbReference>
<dbReference type="FunFam" id="3.40.30.10:FF:000116">
    <property type="entry name" value="Thiol:disulfide interchange protein DsbD"/>
    <property type="match status" value="1"/>
</dbReference>
<dbReference type="Gene3D" id="3.40.30.10">
    <property type="entry name" value="Glutaredoxin"/>
    <property type="match status" value="1"/>
</dbReference>
<dbReference type="Gene3D" id="2.60.40.1250">
    <property type="entry name" value="Thiol:disulfide interchange protein DsbD, N-terminal domain"/>
    <property type="match status" value="1"/>
</dbReference>
<dbReference type="HAMAP" id="MF_00399">
    <property type="entry name" value="DbsD"/>
    <property type="match status" value="1"/>
</dbReference>
<dbReference type="InterPro" id="IPR003834">
    <property type="entry name" value="Cyt_c_assmbl_TM_dom"/>
</dbReference>
<dbReference type="InterPro" id="IPR035671">
    <property type="entry name" value="DsbD_gamma"/>
</dbReference>
<dbReference type="InterPro" id="IPR028250">
    <property type="entry name" value="DsbDN"/>
</dbReference>
<dbReference type="InterPro" id="IPR036929">
    <property type="entry name" value="DsbDN_sf"/>
</dbReference>
<dbReference type="InterPro" id="IPR022910">
    <property type="entry name" value="Thiol_diS_interchange_DbsD"/>
</dbReference>
<dbReference type="InterPro" id="IPR012336">
    <property type="entry name" value="Thioredoxin-like_fold"/>
</dbReference>
<dbReference type="InterPro" id="IPR036249">
    <property type="entry name" value="Thioredoxin-like_sf"/>
</dbReference>
<dbReference type="InterPro" id="IPR017937">
    <property type="entry name" value="Thioredoxin_CS"/>
</dbReference>
<dbReference type="InterPro" id="IPR013766">
    <property type="entry name" value="Thioredoxin_domain"/>
</dbReference>
<dbReference type="NCBIfam" id="NF001419">
    <property type="entry name" value="PRK00293.1"/>
    <property type="match status" value="1"/>
</dbReference>
<dbReference type="PANTHER" id="PTHR32234">
    <property type="entry name" value="THIOL:DISULFIDE INTERCHANGE PROTEIN DSBD"/>
    <property type="match status" value="1"/>
</dbReference>
<dbReference type="PANTHER" id="PTHR32234:SF0">
    <property type="entry name" value="THIOL:DISULFIDE INTERCHANGE PROTEIN DSBD"/>
    <property type="match status" value="1"/>
</dbReference>
<dbReference type="Pfam" id="PF11412">
    <property type="entry name" value="DsbD_N"/>
    <property type="match status" value="1"/>
</dbReference>
<dbReference type="Pfam" id="PF02683">
    <property type="entry name" value="DsbD_TM"/>
    <property type="match status" value="1"/>
</dbReference>
<dbReference type="Pfam" id="PF13098">
    <property type="entry name" value="Thioredoxin_2"/>
    <property type="match status" value="1"/>
</dbReference>
<dbReference type="SUPFAM" id="SSF74863">
    <property type="entry name" value="Thiol:disulfide interchange protein DsbD, N-terminal domain (DsbD-alpha)"/>
    <property type="match status" value="1"/>
</dbReference>
<dbReference type="SUPFAM" id="SSF52833">
    <property type="entry name" value="Thioredoxin-like"/>
    <property type="match status" value="1"/>
</dbReference>
<dbReference type="PROSITE" id="PS00194">
    <property type="entry name" value="THIOREDOXIN_1"/>
    <property type="match status" value="1"/>
</dbReference>
<dbReference type="PROSITE" id="PS51352">
    <property type="entry name" value="THIOREDOXIN_2"/>
    <property type="match status" value="1"/>
</dbReference>
<name>DSBD_HAEI8</name>
<feature type="signal peptide" evidence="1">
    <location>
        <begin position="1"/>
        <end position="16"/>
    </location>
</feature>
<feature type="chain" id="PRO_0000304389" description="Thiol:disulfide interchange protein DsbD">
    <location>
        <begin position="17"/>
        <end position="579"/>
    </location>
</feature>
<feature type="transmembrane region" description="Helical" evidence="1">
    <location>
        <begin position="178"/>
        <end position="198"/>
    </location>
</feature>
<feature type="transmembrane region" description="Helical" evidence="1">
    <location>
        <begin position="230"/>
        <end position="250"/>
    </location>
</feature>
<feature type="transmembrane region" description="Helical" evidence="1">
    <location>
        <begin position="254"/>
        <end position="274"/>
    </location>
</feature>
<feature type="transmembrane region" description="Helical" evidence="1">
    <location>
        <begin position="296"/>
        <end position="316"/>
    </location>
</feature>
<feature type="transmembrane region" description="Helical" evidence="1">
    <location>
        <begin position="337"/>
        <end position="357"/>
    </location>
</feature>
<feature type="transmembrane region" description="Helical" evidence="1">
    <location>
        <begin position="376"/>
        <end position="396"/>
    </location>
</feature>
<feature type="transmembrane region" description="Helical" evidence="1">
    <location>
        <begin position="397"/>
        <end position="417"/>
    </location>
</feature>
<feature type="transmembrane region" description="Helical" evidence="1">
    <location>
        <begin position="420"/>
        <end position="440"/>
    </location>
</feature>
<feature type="domain" description="Thioredoxin" evidence="1">
    <location>
        <begin position="449"/>
        <end position="579"/>
    </location>
</feature>
<feature type="disulfide bond" description="Redox-active" evidence="1">
    <location>
        <begin position="124"/>
        <end position="129"/>
    </location>
</feature>
<feature type="disulfide bond" description="Redox-active" evidence="1">
    <location>
        <begin position="193"/>
        <end position="315"/>
    </location>
</feature>
<feature type="disulfide bond" description="Redox-active" evidence="1">
    <location>
        <begin position="495"/>
        <end position="498"/>
    </location>
</feature>
<protein>
    <recommendedName>
        <fullName evidence="1">Thiol:disulfide interchange protein DsbD</fullName>
        <ecNumber evidence="1">1.8.1.8</ecNumber>
    </recommendedName>
    <alternativeName>
        <fullName evidence="1">Protein-disulfide reductase</fullName>
        <shortName evidence="1">Disulfide reductase</shortName>
    </alternativeName>
</protein>
<reference key="1">
    <citation type="journal article" date="2005" name="J. Bacteriol.">
        <title>Genomic sequence of an otitis media isolate of nontypeable Haemophilus influenzae: comparative study with H. influenzae serotype d, strain KW20.</title>
        <authorList>
            <person name="Harrison A."/>
            <person name="Dyer D.W."/>
            <person name="Gillaspy A."/>
            <person name="Ray W.C."/>
            <person name="Mungur R."/>
            <person name="Carson M.B."/>
            <person name="Zhong H."/>
            <person name="Gipson J."/>
            <person name="Gipson M."/>
            <person name="Johnson L.S."/>
            <person name="Lewis L."/>
            <person name="Bakaletz L.O."/>
            <person name="Munson R.S. Jr."/>
        </authorList>
    </citation>
    <scope>NUCLEOTIDE SEQUENCE [LARGE SCALE GENOMIC DNA]</scope>
    <source>
        <strain>86-028NP</strain>
    </source>
</reference>
<accession>Q4QM23</accession>
<gene>
    <name evidence="1" type="primary">dsbD</name>
    <name type="ordered locus">NTHI1048</name>
</gene>
<organism>
    <name type="scientific">Haemophilus influenzae (strain 86-028NP)</name>
    <dbReference type="NCBI Taxonomy" id="281310"/>
    <lineage>
        <taxon>Bacteria</taxon>
        <taxon>Pseudomonadati</taxon>
        <taxon>Pseudomonadota</taxon>
        <taxon>Gammaproteobacteria</taxon>
        <taxon>Pasteurellales</taxon>
        <taxon>Pasteurellaceae</taxon>
        <taxon>Haemophilus</taxon>
    </lineage>
</organism>
<comment type="function">
    <text evidence="1">Required to facilitate the formation of correct disulfide bonds in some periplasmic proteins and for the assembly of the periplasmic c-type cytochromes. Acts by transferring electrons from cytoplasmic thioredoxin to the periplasm. This transfer involves a cascade of disulfide bond formation and reduction steps.</text>
</comment>
<comment type="catalytic activity">
    <reaction evidence="1">
        <text>[protein]-dithiol + NAD(+) = [protein]-disulfide + NADH + H(+)</text>
        <dbReference type="Rhea" id="RHEA:18749"/>
        <dbReference type="Rhea" id="RHEA-COMP:10593"/>
        <dbReference type="Rhea" id="RHEA-COMP:10594"/>
        <dbReference type="ChEBI" id="CHEBI:15378"/>
        <dbReference type="ChEBI" id="CHEBI:29950"/>
        <dbReference type="ChEBI" id="CHEBI:50058"/>
        <dbReference type="ChEBI" id="CHEBI:57540"/>
        <dbReference type="ChEBI" id="CHEBI:57945"/>
        <dbReference type="EC" id="1.8.1.8"/>
    </reaction>
</comment>
<comment type="catalytic activity">
    <reaction evidence="1">
        <text>[protein]-dithiol + NADP(+) = [protein]-disulfide + NADPH + H(+)</text>
        <dbReference type="Rhea" id="RHEA:18753"/>
        <dbReference type="Rhea" id="RHEA-COMP:10593"/>
        <dbReference type="Rhea" id="RHEA-COMP:10594"/>
        <dbReference type="ChEBI" id="CHEBI:15378"/>
        <dbReference type="ChEBI" id="CHEBI:29950"/>
        <dbReference type="ChEBI" id="CHEBI:50058"/>
        <dbReference type="ChEBI" id="CHEBI:57783"/>
        <dbReference type="ChEBI" id="CHEBI:58349"/>
        <dbReference type="EC" id="1.8.1.8"/>
    </reaction>
</comment>
<comment type="subcellular location">
    <subcellularLocation>
        <location evidence="1">Cell inner membrane</location>
        <topology evidence="1">Multi-pass membrane protein</topology>
    </subcellularLocation>
</comment>
<comment type="similarity">
    <text evidence="1">Belongs to the thioredoxin family. DsbD subfamily.</text>
</comment>
<sequence length="579" mass="64418">MKKLFLFFTLIFTAFAANSGLFDKKQTFLKVDDAFAFSATLSTDKSQLQAHWDIADGYYLYQDKISAELVGKSNPLSLHTQQAAELHQDPYFGEVKVFTHSIDGIFRGTFNNADDKVEITYQGCTEGFCYPPETKVLRIGDLAVSQEQIVEKTVEKNTALLSEQDRLADGLFHSKWTIFGFFLLGLGLAFTPCVLPMLPLLSAIVIGQQQRPNMMRAFSLAFLYVQGMALTYTLLGLAVAAIGLPFQIALQHPYVMIGLSILFVALALSMFGLFTIQLPNSLQNKLNTWSQKQTSGAFGGAFAMGMIAGLVASPCTSAPLSGALLYVAQSGDLFTGAATLYLLALGMGVPLMLITLFGNKILPKSGEWMNTVKQTFGFVMLALPVFLLSRILPEVWEPRLWAGLATVFFIWFALQMSKNGFGYAIKIISFALAMVTVQPLQNWIWQTQTTTQSAVENMPVSQVKFKQIKNTEELDRTLAENPHSIAMLDLYADWCVACKEFEKLTFSDPQVQQQFQNILLLQVNMTKNSPENKALMERFNVMGLPTILFFDQQNNEIQGSRVTGFMDADAFSNWLKALH</sequence>
<proteinExistence type="inferred from homology"/>
<evidence type="ECO:0000255" key="1">
    <source>
        <dbReference type="HAMAP-Rule" id="MF_00399"/>
    </source>
</evidence>
<keyword id="KW-0997">Cell inner membrane</keyword>
<keyword id="KW-1003">Cell membrane</keyword>
<keyword id="KW-0201">Cytochrome c-type biogenesis</keyword>
<keyword id="KW-1015">Disulfide bond</keyword>
<keyword id="KW-0249">Electron transport</keyword>
<keyword id="KW-0472">Membrane</keyword>
<keyword id="KW-0520">NAD</keyword>
<keyword id="KW-0560">Oxidoreductase</keyword>
<keyword id="KW-0676">Redox-active center</keyword>
<keyword id="KW-0732">Signal</keyword>
<keyword id="KW-0812">Transmembrane</keyword>
<keyword id="KW-1133">Transmembrane helix</keyword>
<keyword id="KW-0813">Transport</keyword>